<protein>
    <recommendedName>
        <fullName evidence="1">NADH-quinone oxidoreductase subunit B</fullName>
        <ecNumber evidence="1">7.1.1.-</ecNumber>
    </recommendedName>
    <alternativeName>
        <fullName evidence="1">NADH dehydrogenase I subunit B</fullName>
    </alternativeName>
    <alternativeName>
        <fullName evidence="1">NDH-1 subunit B</fullName>
    </alternativeName>
</protein>
<keyword id="KW-0004">4Fe-4S</keyword>
<keyword id="KW-0997">Cell inner membrane</keyword>
<keyword id="KW-1003">Cell membrane</keyword>
<keyword id="KW-0408">Iron</keyword>
<keyword id="KW-0411">Iron-sulfur</keyword>
<keyword id="KW-0472">Membrane</keyword>
<keyword id="KW-0479">Metal-binding</keyword>
<keyword id="KW-0520">NAD</keyword>
<keyword id="KW-0874">Quinone</keyword>
<keyword id="KW-1278">Translocase</keyword>
<keyword id="KW-0813">Transport</keyword>
<keyword id="KW-0830">Ubiquinone</keyword>
<dbReference type="EC" id="7.1.1.-" evidence="1"/>
<dbReference type="EMBL" id="AE017220">
    <property type="protein sequence ID" value="AAX66233.1"/>
    <property type="molecule type" value="Genomic_DNA"/>
</dbReference>
<dbReference type="RefSeq" id="WP_000386728.1">
    <property type="nucleotide sequence ID" value="NC_006905.1"/>
</dbReference>
<dbReference type="SMR" id="Q57M29"/>
<dbReference type="KEGG" id="sec:SCH_2327"/>
<dbReference type="HOGENOM" id="CLU_055737_7_3_6"/>
<dbReference type="Proteomes" id="UP000000538">
    <property type="component" value="Chromosome"/>
</dbReference>
<dbReference type="GO" id="GO:0005886">
    <property type="term" value="C:plasma membrane"/>
    <property type="evidence" value="ECO:0007669"/>
    <property type="project" value="UniProtKB-SubCell"/>
</dbReference>
<dbReference type="GO" id="GO:0045271">
    <property type="term" value="C:respiratory chain complex I"/>
    <property type="evidence" value="ECO:0007669"/>
    <property type="project" value="TreeGrafter"/>
</dbReference>
<dbReference type="GO" id="GO:0051539">
    <property type="term" value="F:4 iron, 4 sulfur cluster binding"/>
    <property type="evidence" value="ECO:0007669"/>
    <property type="project" value="UniProtKB-KW"/>
</dbReference>
<dbReference type="GO" id="GO:0005506">
    <property type="term" value="F:iron ion binding"/>
    <property type="evidence" value="ECO:0007669"/>
    <property type="project" value="UniProtKB-UniRule"/>
</dbReference>
<dbReference type="GO" id="GO:0008137">
    <property type="term" value="F:NADH dehydrogenase (ubiquinone) activity"/>
    <property type="evidence" value="ECO:0007669"/>
    <property type="project" value="InterPro"/>
</dbReference>
<dbReference type="GO" id="GO:0050136">
    <property type="term" value="F:NADH:ubiquinone reductase (non-electrogenic) activity"/>
    <property type="evidence" value="ECO:0007669"/>
    <property type="project" value="UniProtKB-UniRule"/>
</dbReference>
<dbReference type="GO" id="GO:0048038">
    <property type="term" value="F:quinone binding"/>
    <property type="evidence" value="ECO:0007669"/>
    <property type="project" value="UniProtKB-KW"/>
</dbReference>
<dbReference type="GO" id="GO:0009060">
    <property type="term" value="P:aerobic respiration"/>
    <property type="evidence" value="ECO:0007669"/>
    <property type="project" value="TreeGrafter"/>
</dbReference>
<dbReference type="GO" id="GO:0015990">
    <property type="term" value="P:electron transport coupled proton transport"/>
    <property type="evidence" value="ECO:0007669"/>
    <property type="project" value="TreeGrafter"/>
</dbReference>
<dbReference type="FunFam" id="3.40.50.12280:FF:000002">
    <property type="entry name" value="NADH-quinone oxidoreductase subunit B"/>
    <property type="match status" value="1"/>
</dbReference>
<dbReference type="Gene3D" id="3.40.50.12280">
    <property type="match status" value="1"/>
</dbReference>
<dbReference type="HAMAP" id="MF_01356">
    <property type="entry name" value="NDH1_NuoB"/>
    <property type="match status" value="1"/>
</dbReference>
<dbReference type="InterPro" id="IPR006137">
    <property type="entry name" value="NADH_UbQ_OxRdtase-like_20kDa"/>
</dbReference>
<dbReference type="InterPro" id="IPR006138">
    <property type="entry name" value="NADH_UQ_OxRdtase_20Kd_su"/>
</dbReference>
<dbReference type="NCBIfam" id="TIGR01957">
    <property type="entry name" value="nuoB_fam"/>
    <property type="match status" value="1"/>
</dbReference>
<dbReference type="NCBIfam" id="NF005012">
    <property type="entry name" value="PRK06411.1"/>
    <property type="match status" value="1"/>
</dbReference>
<dbReference type="PANTHER" id="PTHR11995">
    <property type="entry name" value="NADH DEHYDROGENASE"/>
    <property type="match status" value="1"/>
</dbReference>
<dbReference type="PANTHER" id="PTHR11995:SF14">
    <property type="entry name" value="NADH DEHYDROGENASE [UBIQUINONE] IRON-SULFUR PROTEIN 7, MITOCHONDRIAL"/>
    <property type="match status" value="1"/>
</dbReference>
<dbReference type="Pfam" id="PF01058">
    <property type="entry name" value="Oxidored_q6"/>
    <property type="match status" value="1"/>
</dbReference>
<dbReference type="SUPFAM" id="SSF56770">
    <property type="entry name" value="HydA/Nqo6-like"/>
    <property type="match status" value="1"/>
</dbReference>
<dbReference type="PROSITE" id="PS01150">
    <property type="entry name" value="COMPLEX1_20K"/>
    <property type="match status" value="1"/>
</dbReference>
<evidence type="ECO:0000255" key="1">
    <source>
        <dbReference type="HAMAP-Rule" id="MF_01356"/>
    </source>
</evidence>
<proteinExistence type="inferred from homology"/>
<sequence>MDYTLTRIDPNGENDRYPLQKQEIVTDPLEQEVNKNVFMGKLHDMVNWGRKNSIWPYNFGLSCCYVEMVTSFTAVHDVARFGAEVLRASPRQADLMVVAGTCFTKMAPVIQRLYDQMLEPKWVISMGACANSGGMYDIYSVVQGVDKFIPVDVYIPGCPPRPEAYMQALMLLQESIGKERRPLSWVVGDQGVYRANMQPERERKRGERIAVTNLRTPDEI</sequence>
<feature type="chain" id="PRO_0000376361" description="NADH-quinone oxidoreductase subunit B">
    <location>
        <begin position="1"/>
        <end position="220"/>
    </location>
</feature>
<feature type="binding site" evidence="1">
    <location>
        <position position="63"/>
    </location>
    <ligand>
        <name>[4Fe-4S] cluster</name>
        <dbReference type="ChEBI" id="CHEBI:49883"/>
    </ligand>
</feature>
<feature type="binding site" evidence="1">
    <location>
        <position position="64"/>
    </location>
    <ligand>
        <name>[4Fe-4S] cluster</name>
        <dbReference type="ChEBI" id="CHEBI:49883"/>
    </ligand>
</feature>
<feature type="binding site" evidence="1">
    <location>
        <position position="129"/>
    </location>
    <ligand>
        <name>[4Fe-4S] cluster</name>
        <dbReference type="ChEBI" id="CHEBI:49883"/>
    </ligand>
</feature>
<feature type="binding site" evidence="1">
    <location>
        <position position="158"/>
    </location>
    <ligand>
        <name>[4Fe-4S] cluster</name>
        <dbReference type="ChEBI" id="CHEBI:49883"/>
    </ligand>
</feature>
<name>NUOB_SALCH</name>
<comment type="function">
    <text evidence="1">NDH-1 shuttles electrons from NADH, via FMN and iron-sulfur (Fe-S) centers, to quinones in the respiratory chain. The immediate electron acceptor for the enzyme in this species is believed to be ubiquinone. Couples the redox reaction to proton translocation (for every two electrons transferred, four hydrogen ions are translocated across the cytoplasmic membrane), and thus conserves the redox energy in a proton gradient.</text>
</comment>
<comment type="catalytic activity">
    <reaction evidence="1">
        <text>a quinone + NADH + 5 H(+)(in) = a quinol + NAD(+) + 4 H(+)(out)</text>
        <dbReference type="Rhea" id="RHEA:57888"/>
        <dbReference type="ChEBI" id="CHEBI:15378"/>
        <dbReference type="ChEBI" id="CHEBI:24646"/>
        <dbReference type="ChEBI" id="CHEBI:57540"/>
        <dbReference type="ChEBI" id="CHEBI:57945"/>
        <dbReference type="ChEBI" id="CHEBI:132124"/>
    </reaction>
</comment>
<comment type="cofactor">
    <cofactor evidence="1">
        <name>[4Fe-4S] cluster</name>
        <dbReference type="ChEBI" id="CHEBI:49883"/>
    </cofactor>
    <text evidence="1">Binds 1 [4Fe-4S] cluster.</text>
</comment>
<comment type="subunit">
    <text evidence="1">NDH-1 is composed of 13 different subunits. Subunits NuoB, CD, E, F, and G constitute the peripheral sector of the complex.</text>
</comment>
<comment type="subcellular location">
    <subcellularLocation>
        <location evidence="1">Cell inner membrane</location>
        <topology evidence="1">Peripheral membrane protein</topology>
        <orientation evidence="1">Cytoplasmic side</orientation>
    </subcellularLocation>
</comment>
<comment type="similarity">
    <text evidence="1">Belongs to the complex I 20 kDa subunit family.</text>
</comment>
<reference key="1">
    <citation type="journal article" date="2005" name="Nucleic Acids Res.">
        <title>The genome sequence of Salmonella enterica serovar Choleraesuis, a highly invasive and resistant zoonotic pathogen.</title>
        <authorList>
            <person name="Chiu C.-H."/>
            <person name="Tang P."/>
            <person name="Chu C."/>
            <person name="Hu S."/>
            <person name="Bao Q."/>
            <person name="Yu J."/>
            <person name="Chou Y.-Y."/>
            <person name="Wang H.-S."/>
            <person name="Lee Y.-S."/>
        </authorList>
    </citation>
    <scope>NUCLEOTIDE SEQUENCE [LARGE SCALE GENOMIC DNA]</scope>
    <source>
        <strain>SC-B67</strain>
    </source>
</reference>
<organism>
    <name type="scientific">Salmonella choleraesuis (strain SC-B67)</name>
    <dbReference type="NCBI Taxonomy" id="321314"/>
    <lineage>
        <taxon>Bacteria</taxon>
        <taxon>Pseudomonadati</taxon>
        <taxon>Pseudomonadota</taxon>
        <taxon>Gammaproteobacteria</taxon>
        <taxon>Enterobacterales</taxon>
        <taxon>Enterobacteriaceae</taxon>
        <taxon>Salmonella</taxon>
    </lineage>
</organism>
<accession>Q57M29</accession>
<gene>
    <name evidence="1" type="primary">nuoB</name>
    <name type="ordered locus">SCH_2327</name>
</gene>